<keyword id="KW-0025">Alternative splicing</keyword>
<keyword id="KW-1003">Cell membrane</keyword>
<keyword id="KW-1015">Disulfide bond</keyword>
<keyword id="KW-0325">Glycoprotein</keyword>
<keyword id="KW-0390">IgG-binding protein</keyword>
<keyword id="KW-0393">Immunoglobulin domain</keyword>
<keyword id="KW-0472">Membrane</keyword>
<keyword id="KW-0675">Receptor</keyword>
<keyword id="KW-1185">Reference proteome</keyword>
<keyword id="KW-0677">Repeat</keyword>
<keyword id="KW-0732">Signal</keyword>
<keyword id="KW-0812">Transmembrane</keyword>
<keyword id="KW-1133">Transmembrane helix</keyword>
<sequence>MTLETQMFQNAHSGSQWLLPPLTMLLLFAFADRQTANLPKAVVKRDPPWIQVLKEDTVTLTCEGTHNPGNSSTQWFHNQSSTWGQVQASYTFKATVNDSGEYRCRMAHTSLSDPVHLEVISDWLLLQTPQLVFEEGETITLRCHSWKNKQLTKVLLFQNGKPVRYYYQSSNFSIPKANHSHSGNYYCKAYLGRTMHVSKPVTITVQGSATASTSSLVWFHAAFCLVMCLLFAVDTGLYFCVRRNLQTSGEDWRKSLSVGKYKAPQDK</sequence>
<name>FCGR3_RAT</name>
<comment type="function">
    <text evidence="1 4">Receptor for the Fc region of complexed immunoglobulins gamma (PubMed:1692135). Low affinity receptor which binds to IgG1, IgG2a and IgG2b (By similarity). Mediates neutrophil activation by IgG complexes redundantly with Fcgr4 (By similarity).</text>
</comment>
<comment type="subunit">
    <text>May form multisubunit complex with other heteroproteins. This association is required for efficient cell-surface expression. Does not associate with CD3 zeta.</text>
</comment>
<comment type="subcellular location">
    <subcellularLocation>
        <location evidence="1">Cell membrane</location>
        <topology evidence="6">Single-pass type I membrane protein</topology>
    </subcellularLocation>
</comment>
<comment type="alternative products">
    <event type="alternative splicing"/>
    <isoform>
        <id>P27645-1</id>
        <name>C</name>
        <sequence type="displayed"/>
    </isoform>
    <isoform>
        <id>P27645-3</id>
        <name>A</name>
        <sequence type="not described"/>
    </isoform>
    <isoform>
        <id>P27645-4</id>
        <name>B</name>
        <sequence type="not described"/>
    </isoform>
    <isoform>
        <id>P27645-5</id>
        <name>D</name>
        <sequence type="not described"/>
    </isoform>
    <isoform>
        <id>P27645-6</id>
        <name>E</name>
        <sequence type="not described"/>
    </isoform>
    <isoform>
        <id>P27645-7</id>
        <name>F</name>
        <sequence type="not described"/>
    </isoform>
    <isoform>
        <id>P27645-8</id>
        <name>G</name>
        <sequence type="not described"/>
    </isoform>
    <isoform>
        <id>P27645-2</id>
        <name>H</name>
        <sequence type="described" ref="VSP_002647"/>
    </isoform>
    <text>Additional isoforms seem to exist.</text>
</comment>
<comment type="tissue specificity">
    <text>Expressed on natural killer cells and macrophages.</text>
</comment>
<gene>
    <name type="primary">Fcgr3</name>
</gene>
<dbReference type="EMBL" id="M64368">
    <property type="protein sequence ID" value="AAA42049.1"/>
    <property type="molecule type" value="mRNA"/>
</dbReference>
<dbReference type="EMBL" id="M64369">
    <property type="protein sequence ID" value="AAA42048.1"/>
    <property type="molecule type" value="mRNA"/>
</dbReference>
<dbReference type="EMBL" id="M64370">
    <property type="protein sequence ID" value="AAA42050.1"/>
    <property type="molecule type" value="mRNA"/>
</dbReference>
<dbReference type="EMBL" id="M32062">
    <property type="protein sequence ID" value="AAA41148.1"/>
    <property type="molecule type" value="mRNA"/>
</dbReference>
<dbReference type="EMBL" id="L08446">
    <property type="protein sequence ID" value="AAA41151.1"/>
    <property type="molecule type" value="mRNA"/>
</dbReference>
<dbReference type="PIR" id="A35902">
    <property type="entry name" value="A35902"/>
</dbReference>
<dbReference type="PIR" id="I56110">
    <property type="entry name" value="I56110"/>
</dbReference>
<dbReference type="PIR" id="I72882">
    <property type="entry name" value="I72882"/>
</dbReference>
<dbReference type="RefSeq" id="NP_446295.2">
    <property type="nucleotide sequence ID" value="NM_053843.2"/>
</dbReference>
<dbReference type="RefSeq" id="XP_006250365.1">
    <property type="nucleotide sequence ID" value="XM_006250303.3"/>
</dbReference>
<dbReference type="RefSeq" id="XP_006250367.1">
    <property type="nucleotide sequence ID" value="XM_006250305.3"/>
</dbReference>
<dbReference type="RefSeq" id="XP_008767970.1">
    <property type="nucleotide sequence ID" value="XM_008769748.2"/>
</dbReference>
<dbReference type="RefSeq" id="XP_008767989.1">
    <property type="nucleotide sequence ID" value="XM_008769767.1"/>
</dbReference>
<dbReference type="RefSeq" id="XP_008767990.1">
    <property type="nucleotide sequence ID" value="XM_008769768.2"/>
</dbReference>
<dbReference type="RefSeq" id="XP_008767991.1">
    <property type="nucleotide sequence ID" value="XM_008769769.2"/>
</dbReference>
<dbReference type="RefSeq" id="XP_008767993.1">
    <property type="nucleotide sequence ID" value="XM_008769771.2"/>
</dbReference>
<dbReference type="RefSeq" id="XP_008767994.1">
    <property type="nucleotide sequence ID" value="XM_008769772.2"/>
</dbReference>
<dbReference type="RefSeq" id="XP_008767996.1">
    <property type="nucleotide sequence ID" value="XM_008769774.2"/>
</dbReference>
<dbReference type="RefSeq" id="XP_008767997.1">
    <property type="nucleotide sequence ID" value="XM_008769775.2"/>
</dbReference>
<dbReference type="RefSeq" id="XP_008767998.1">
    <property type="nucleotide sequence ID" value="XM_008769776.2"/>
</dbReference>
<dbReference type="RefSeq" id="XP_017454126.1">
    <property type="nucleotide sequence ID" value="XM_017598637.1"/>
</dbReference>
<dbReference type="SMR" id="P27645"/>
<dbReference type="FunCoup" id="P27645">
    <property type="interactions" value="270"/>
</dbReference>
<dbReference type="STRING" id="10116.ENSRNOP00000004204"/>
<dbReference type="GlyCosmos" id="P27645">
    <property type="glycosylation" value="5 sites, No reported glycans"/>
</dbReference>
<dbReference type="GlyGen" id="P27645">
    <property type="glycosylation" value="5 sites"/>
</dbReference>
<dbReference type="PhosphoSitePlus" id="P27645"/>
<dbReference type="PaxDb" id="10116-ENSRNOP00000039989"/>
<dbReference type="Ensembl" id="ENSRNOT00000047349.7">
    <molecule id="P27645-1"/>
    <property type="protein sequence ID" value="ENSRNOP00000039989.4"/>
    <property type="gene ID" value="ENSRNOG00000046663.3"/>
</dbReference>
<dbReference type="Ensembl" id="ENSRNOT00000073643.3">
    <molecule id="P27645-1"/>
    <property type="protein sequence ID" value="ENSRNOP00000064819.2"/>
    <property type="gene ID" value="ENSRNOG00000046663.3"/>
</dbReference>
<dbReference type="GeneID" id="116591"/>
<dbReference type="KEGG" id="rno:116591"/>
<dbReference type="KEGG" id="rno:498276"/>
<dbReference type="UCSC" id="RGD:71069">
    <molecule id="P27645-1"/>
    <property type="organism name" value="rat"/>
</dbReference>
<dbReference type="AGR" id="RGD:1594388"/>
<dbReference type="AGR" id="RGD:402165887"/>
<dbReference type="AGR" id="RGD:71069"/>
<dbReference type="CTD" id="2212"/>
<dbReference type="CTD" id="498276"/>
<dbReference type="RGD" id="71069">
    <property type="gene designation" value="Fcgr3"/>
</dbReference>
<dbReference type="VEuPathDB" id="HostDB:ENSRNOG00000049422"/>
<dbReference type="eggNOG" id="ENOG502SVEW">
    <property type="taxonomic scope" value="Eukaryota"/>
</dbReference>
<dbReference type="GeneTree" id="ENSGT01050000244808"/>
<dbReference type="InParanoid" id="P27645"/>
<dbReference type="OMA" id="LKCHGAH"/>
<dbReference type="OrthoDB" id="6151406at2759"/>
<dbReference type="PhylomeDB" id="P27645"/>
<dbReference type="Reactome" id="R-RNO-198933">
    <property type="pathway name" value="Immunoregulatory interactions between a Lymphoid and a non-Lymphoid cell"/>
</dbReference>
<dbReference type="PRO" id="PR:P27645"/>
<dbReference type="Proteomes" id="UP000002494">
    <property type="component" value="Chromosome 13"/>
</dbReference>
<dbReference type="Bgee" id="ENSRNOG00000049422">
    <property type="expression patterns" value="Expressed in lung and 19 other cell types or tissues"/>
</dbReference>
<dbReference type="GO" id="GO:0009986">
    <property type="term" value="C:cell surface"/>
    <property type="evidence" value="ECO:0000314"/>
    <property type="project" value="RGD"/>
</dbReference>
<dbReference type="GO" id="GO:0009897">
    <property type="term" value="C:external side of plasma membrane"/>
    <property type="evidence" value="ECO:0000266"/>
    <property type="project" value="RGD"/>
</dbReference>
<dbReference type="GO" id="GO:0019864">
    <property type="term" value="F:IgG binding"/>
    <property type="evidence" value="ECO:0000266"/>
    <property type="project" value="RGD"/>
</dbReference>
<dbReference type="GO" id="GO:0019770">
    <property type="term" value="F:IgG receptor activity"/>
    <property type="evidence" value="ECO:0000266"/>
    <property type="project" value="RGD"/>
</dbReference>
<dbReference type="GO" id="GO:0034987">
    <property type="term" value="F:immunoglobulin receptor binding"/>
    <property type="evidence" value="ECO:0000314"/>
    <property type="project" value="RGD"/>
</dbReference>
<dbReference type="GO" id="GO:0001788">
    <property type="term" value="P:antibody-dependent cellular cytotoxicity"/>
    <property type="evidence" value="ECO:0000266"/>
    <property type="project" value="RGD"/>
</dbReference>
<dbReference type="GO" id="GO:0042590">
    <property type="term" value="P:antigen processing and presentation of exogenous peptide antigen via MHC class I"/>
    <property type="evidence" value="ECO:0000266"/>
    <property type="project" value="RGD"/>
</dbReference>
<dbReference type="GO" id="GO:0007166">
    <property type="term" value="P:cell surface receptor signaling pathway"/>
    <property type="evidence" value="ECO:0000266"/>
    <property type="project" value="RGD"/>
</dbReference>
<dbReference type="GO" id="GO:0045576">
    <property type="term" value="P:mast cell activation"/>
    <property type="evidence" value="ECO:0000266"/>
    <property type="project" value="RGD"/>
</dbReference>
<dbReference type="GO" id="GO:0021675">
    <property type="term" value="P:nerve development"/>
    <property type="evidence" value="ECO:0000270"/>
    <property type="project" value="RGD"/>
</dbReference>
<dbReference type="GO" id="GO:0030593">
    <property type="term" value="P:neutrophil chemotaxis"/>
    <property type="evidence" value="ECO:0000266"/>
    <property type="project" value="RGD"/>
</dbReference>
<dbReference type="GO" id="GO:0006911">
    <property type="term" value="P:phagocytosis, engulfment"/>
    <property type="evidence" value="ECO:0000266"/>
    <property type="project" value="RGD"/>
</dbReference>
<dbReference type="GO" id="GO:0006910">
    <property type="term" value="P:phagocytosis, recognition"/>
    <property type="evidence" value="ECO:0000266"/>
    <property type="project" value="RGD"/>
</dbReference>
<dbReference type="GO" id="GO:0050766">
    <property type="term" value="P:positive regulation of phagocytosis"/>
    <property type="evidence" value="ECO:0000266"/>
    <property type="project" value="RGD"/>
</dbReference>
<dbReference type="GO" id="GO:0032760">
    <property type="term" value="P:positive regulation of tumor necrosis factor production"/>
    <property type="evidence" value="ECO:0000266"/>
    <property type="project" value="RGD"/>
</dbReference>
<dbReference type="GO" id="GO:0001812">
    <property type="term" value="P:positive regulation of type I hypersensitivity"/>
    <property type="evidence" value="ECO:0000266"/>
    <property type="project" value="RGD"/>
</dbReference>
<dbReference type="GO" id="GO:0001798">
    <property type="term" value="P:positive regulation of type IIa hypersensitivity"/>
    <property type="evidence" value="ECO:0000266"/>
    <property type="project" value="RGD"/>
</dbReference>
<dbReference type="GO" id="GO:0001805">
    <property type="term" value="P:positive regulation of type III hypersensitivity"/>
    <property type="evidence" value="ECO:0000266"/>
    <property type="project" value="RGD"/>
</dbReference>
<dbReference type="GO" id="GO:0001813">
    <property type="term" value="P:regulation of antibody-dependent cellular cytotoxicity"/>
    <property type="evidence" value="ECO:0000315"/>
    <property type="project" value="RGD"/>
</dbReference>
<dbReference type="GO" id="GO:0060368">
    <property type="term" value="P:regulation of Fc receptor mediated stimulatory signaling pathway"/>
    <property type="evidence" value="ECO:0000315"/>
    <property type="project" value="RGD"/>
</dbReference>
<dbReference type="GO" id="GO:0050776">
    <property type="term" value="P:regulation of immune response"/>
    <property type="evidence" value="ECO:0000266"/>
    <property type="project" value="RGD"/>
</dbReference>
<dbReference type="GO" id="GO:0050764">
    <property type="term" value="P:regulation of phagocytosis"/>
    <property type="evidence" value="ECO:0000315"/>
    <property type="project" value="RGD"/>
</dbReference>
<dbReference type="GO" id="GO:0032680">
    <property type="term" value="P:regulation of tumor necrosis factor production"/>
    <property type="evidence" value="ECO:0000315"/>
    <property type="project" value="RGD"/>
</dbReference>
<dbReference type="GO" id="GO:0001820">
    <property type="term" value="P:serotonin secretion"/>
    <property type="evidence" value="ECO:0000266"/>
    <property type="project" value="RGD"/>
</dbReference>
<dbReference type="CDD" id="cd05753">
    <property type="entry name" value="Ig2_FcgammaR_like"/>
    <property type="match status" value="1"/>
</dbReference>
<dbReference type="FunFam" id="2.60.40.10:FF:000217">
    <property type="entry name" value="High affinity immunoglobulin gamma Fc receptor I"/>
    <property type="match status" value="1"/>
</dbReference>
<dbReference type="FunFam" id="2.60.40.10:FF:000356">
    <property type="entry name" value="Low affinity immunoglobulin gamma Fc region receptor III-A"/>
    <property type="match status" value="1"/>
</dbReference>
<dbReference type="Gene3D" id="2.60.40.10">
    <property type="entry name" value="Immunoglobulins"/>
    <property type="match status" value="2"/>
</dbReference>
<dbReference type="InterPro" id="IPR007110">
    <property type="entry name" value="Ig-like_dom"/>
</dbReference>
<dbReference type="InterPro" id="IPR036179">
    <property type="entry name" value="Ig-like_dom_sf"/>
</dbReference>
<dbReference type="InterPro" id="IPR013783">
    <property type="entry name" value="Ig-like_fold"/>
</dbReference>
<dbReference type="InterPro" id="IPR050488">
    <property type="entry name" value="Ig_Fc_receptor"/>
</dbReference>
<dbReference type="InterPro" id="IPR003599">
    <property type="entry name" value="Ig_sub"/>
</dbReference>
<dbReference type="PANTHER" id="PTHR11481">
    <property type="entry name" value="IMMUNOGLOBULIN FC RECEPTOR"/>
    <property type="match status" value="1"/>
</dbReference>
<dbReference type="PANTHER" id="PTHR11481:SF97">
    <property type="entry name" value="LOW AFFINITY IMMUNOGLOBULIN GAMMA FC REGION RECEPTOR II-B-RELATED"/>
    <property type="match status" value="1"/>
</dbReference>
<dbReference type="Pfam" id="PF13895">
    <property type="entry name" value="Ig_2"/>
    <property type="match status" value="2"/>
</dbReference>
<dbReference type="SMART" id="SM00409">
    <property type="entry name" value="IG"/>
    <property type="match status" value="2"/>
</dbReference>
<dbReference type="SUPFAM" id="SSF48726">
    <property type="entry name" value="Immunoglobulin"/>
    <property type="match status" value="2"/>
</dbReference>
<dbReference type="PROSITE" id="PS50835">
    <property type="entry name" value="IG_LIKE"/>
    <property type="match status" value="2"/>
</dbReference>
<reference key="1">
    <citation type="journal article" date="1991" name="J. Immunol.">
        <title>Rat CD16 is defined by a family of class III Fc gamma receptors requiring co-expression of heteroprotein subunits.</title>
        <authorList>
            <person name="Farber D.L."/>
            <person name="Sears D.W."/>
        </authorList>
    </citation>
    <scope>NUCLEOTIDE SEQUENCE [MRNA] (ISOFORMS B; C AND D)</scope>
    <source>
        <strain>Sprague-Dawley</strain>
    </source>
</reference>
<reference key="2">
    <citation type="journal article" date="1990" name="Proc. Natl. Acad. Sci. U.S.A.">
        <title>Characterization and expression of an Fc gamma receptor cDNA cloned from rat natural killer cells.</title>
        <authorList>
            <person name="Zeger D.L."/>
            <person name="Hogarth P.M."/>
            <person name="Sears D.W."/>
        </authorList>
    </citation>
    <scope>NUCLEOTIDE SEQUENCE [MRNA] (ISOFORM A)</scope>
    <scope>FUNCTION</scope>
    <source>
        <tissue>Natural killer cell</tissue>
    </source>
</reference>
<reference key="3">
    <citation type="journal article" date="1993" name="J. Immunol.">
        <title>Rat class III Fc gamma receptor isoforms differ in IgG subclass-binding specificity and fail to associate productively with rat CD3 zeta.</title>
        <authorList>
            <person name="Farber D.L."/>
            <person name="Giorda R."/>
            <person name="Nettleton M.Y."/>
            <person name="Trucco M."/>
            <person name="Kochan J.P."/>
            <person name="Sears D.W."/>
        </authorList>
    </citation>
    <scope>NUCLEOTIDE SEQUENCE [MRNA] (ISOFORM H)</scope>
    <source>
        <strain>Sprague-Dawley</strain>
        <tissue>Brain</tissue>
    </source>
</reference>
<organism>
    <name type="scientific">Rattus norvegicus</name>
    <name type="common">Rat</name>
    <dbReference type="NCBI Taxonomy" id="10116"/>
    <lineage>
        <taxon>Eukaryota</taxon>
        <taxon>Metazoa</taxon>
        <taxon>Chordata</taxon>
        <taxon>Craniata</taxon>
        <taxon>Vertebrata</taxon>
        <taxon>Euteleostomi</taxon>
        <taxon>Mammalia</taxon>
        <taxon>Eutheria</taxon>
        <taxon>Euarchontoglires</taxon>
        <taxon>Glires</taxon>
        <taxon>Rodentia</taxon>
        <taxon>Myomorpha</taxon>
        <taxon>Muroidea</taxon>
        <taxon>Muridae</taxon>
        <taxon>Murinae</taxon>
        <taxon>Rattus</taxon>
    </lineage>
</organism>
<evidence type="ECO:0000250" key="1">
    <source>
        <dbReference type="UniProtKB" id="P08508"/>
    </source>
</evidence>
<evidence type="ECO:0000255" key="2"/>
<evidence type="ECO:0000255" key="3">
    <source>
        <dbReference type="PROSITE-ProRule" id="PRU00114"/>
    </source>
</evidence>
<evidence type="ECO:0000269" key="4">
    <source>
    </source>
</evidence>
<evidence type="ECO:0000303" key="5">
    <source>
    </source>
</evidence>
<evidence type="ECO:0000305" key="6"/>
<accession>P27645</accession>
<accession>Q04798</accession>
<accession>Q63204</accession>
<proteinExistence type="evidence at transcript level"/>
<protein>
    <recommendedName>
        <fullName>Low affinity immunoglobulin gamma Fc region receptor III</fullName>
        <shortName>IgG Fc receptor III</shortName>
    </recommendedName>
    <alternativeName>
        <fullName>Fc-gamma RIII</fullName>
        <shortName>FcRIII</shortName>
    </alternativeName>
    <cdAntigenName>CD16</cdAntigenName>
</protein>
<feature type="signal peptide" evidence="2">
    <location>
        <begin position="1"/>
        <end position="36"/>
    </location>
</feature>
<feature type="chain" id="PRO_0000015156" description="Low affinity immunoglobulin gamma Fc region receptor III">
    <location>
        <begin position="37"/>
        <end position="267"/>
    </location>
</feature>
<feature type="topological domain" description="Extracellular" evidence="2">
    <location>
        <begin position="37"/>
        <end position="221"/>
    </location>
</feature>
<feature type="transmembrane region" description="Helical" evidence="2">
    <location>
        <begin position="222"/>
        <end position="241"/>
    </location>
</feature>
<feature type="topological domain" description="Cytoplasmic" evidence="2">
    <location>
        <begin position="242"/>
        <end position="267"/>
    </location>
</feature>
<feature type="domain" description="Ig-like C2-type 1">
    <location>
        <begin position="39"/>
        <end position="121"/>
    </location>
</feature>
<feature type="domain" description="Ig-like C2-type 2">
    <location>
        <begin position="122"/>
        <end position="204"/>
    </location>
</feature>
<feature type="glycosylation site" description="N-linked (GlcNAc...) asparagine" evidence="2">
    <location>
        <position position="70"/>
    </location>
</feature>
<feature type="glycosylation site" description="N-linked (GlcNAc...) asparagine" evidence="2">
    <location>
        <position position="78"/>
    </location>
</feature>
<feature type="glycosylation site" description="N-linked (GlcNAc...) asparagine" evidence="2">
    <location>
        <position position="97"/>
    </location>
</feature>
<feature type="glycosylation site" description="N-linked (GlcNAc...) asparagine" evidence="2">
    <location>
        <position position="171"/>
    </location>
</feature>
<feature type="glycosylation site" description="N-linked (GlcNAc...) asparagine" evidence="2">
    <location>
        <position position="178"/>
    </location>
</feature>
<feature type="disulfide bond" evidence="3">
    <location>
        <begin position="62"/>
        <end position="104"/>
    </location>
</feature>
<feature type="disulfide bond" evidence="3">
    <location>
        <begin position="143"/>
        <end position="187"/>
    </location>
</feature>
<feature type="splice variant" id="VSP_002647" description="In isoform H." evidence="5">
    <original>SWKNKQLTKVLLFQNGKPVRYYYQSSNFSIPK</original>
    <variation>GWKSIQLARISFLQNGEFVSFHPYNVSYSISN</variation>
    <location>
        <begin position="145"/>
        <end position="176"/>
    </location>
</feature>
<feature type="sequence variant" description="In isoform A and isoform H.">
    <original>ANLP</original>
    <variation>GDLL</variation>
    <location>
        <begin position="36"/>
        <end position="39"/>
    </location>
</feature>
<feature type="sequence variant" description="In isoform A and isoform H.">
    <original>E</original>
    <variation>D</variation>
    <location>
        <position position="55"/>
    </location>
</feature>
<feature type="sequence variant" description="In isoform D.">
    <original>D</original>
    <variation>G</variation>
    <location>
        <position position="56"/>
    </location>
</feature>
<feature type="sequence variant" description="In isoform A and isoform B.">
    <original>V</original>
    <variation>I</variation>
    <location>
        <position position="115"/>
    </location>
</feature>
<feature type="sequence variant" description="In isoform H.">
    <original>E</original>
    <variation>L</variation>
    <location>
        <position position="134"/>
    </location>
</feature>
<feature type="sequence variant" description="In isoform H.">
    <original>T</original>
    <variation>R</variation>
    <location>
        <position position="138"/>
    </location>
</feature>
<feature type="sequence variant" description="In isoform H.">
    <original>N</original>
    <variation>D</variation>
    <location>
        <position position="184"/>
    </location>
</feature>
<feature type="sequence variant" description="In isoform H.">
    <original>M</original>
    <variation>E</variation>
    <location>
        <position position="195"/>
    </location>
</feature>
<feature type="sequence variant" description="In isoform H.">
    <original>K</original>
    <variation>R</variation>
    <location>
        <position position="254"/>
    </location>
</feature>